<feature type="chain" id="PRO_1000214455" description="Large ribosomal subunit protein uL2">
    <location>
        <begin position="1"/>
        <end position="274"/>
    </location>
</feature>
<feature type="region of interest" description="Disordered" evidence="2">
    <location>
        <begin position="28"/>
        <end position="54"/>
    </location>
</feature>
<feature type="region of interest" description="Disordered" evidence="2">
    <location>
        <begin position="224"/>
        <end position="274"/>
    </location>
</feature>
<feature type="compositionally biased region" description="Basic and acidic residues" evidence="2">
    <location>
        <begin position="263"/>
        <end position="274"/>
    </location>
</feature>
<keyword id="KW-0687">Ribonucleoprotein</keyword>
<keyword id="KW-0689">Ribosomal protein</keyword>
<keyword id="KW-0694">RNA-binding</keyword>
<keyword id="KW-0699">rRNA-binding</keyword>
<dbReference type="EMBL" id="AM181176">
    <property type="protein sequence ID" value="CAY52761.1"/>
    <property type="molecule type" value="Genomic_DNA"/>
</dbReference>
<dbReference type="RefSeq" id="WP_003176423.1">
    <property type="nucleotide sequence ID" value="NC_012660.1"/>
</dbReference>
<dbReference type="SMR" id="C3K2X3"/>
<dbReference type="STRING" id="294.SRM1_05176"/>
<dbReference type="GeneID" id="97827731"/>
<dbReference type="eggNOG" id="COG0090">
    <property type="taxonomic scope" value="Bacteria"/>
</dbReference>
<dbReference type="HOGENOM" id="CLU_036235_2_1_6"/>
<dbReference type="OrthoDB" id="9778722at2"/>
<dbReference type="GO" id="GO:0015934">
    <property type="term" value="C:large ribosomal subunit"/>
    <property type="evidence" value="ECO:0007669"/>
    <property type="project" value="InterPro"/>
</dbReference>
<dbReference type="GO" id="GO:0019843">
    <property type="term" value="F:rRNA binding"/>
    <property type="evidence" value="ECO:0007669"/>
    <property type="project" value="UniProtKB-UniRule"/>
</dbReference>
<dbReference type="GO" id="GO:0003735">
    <property type="term" value="F:structural constituent of ribosome"/>
    <property type="evidence" value="ECO:0007669"/>
    <property type="project" value="InterPro"/>
</dbReference>
<dbReference type="GO" id="GO:0016740">
    <property type="term" value="F:transferase activity"/>
    <property type="evidence" value="ECO:0007669"/>
    <property type="project" value="InterPro"/>
</dbReference>
<dbReference type="GO" id="GO:0002181">
    <property type="term" value="P:cytoplasmic translation"/>
    <property type="evidence" value="ECO:0007669"/>
    <property type="project" value="TreeGrafter"/>
</dbReference>
<dbReference type="FunFam" id="2.30.30.30:FF:000001">
    <property type="entry name" value="50S ribosomal protein L2"/>
    <property type="match status" value="1"/>
</dbReference>
<dbReference type="FunFam" id="2.40.50.140:FF:000003">
    <property type="entry name" value="50S ribosomal protein L2"/>
    <property type="match status" value="1"/>
</dbReference>
<dbReference type="FunFam" id="4.10.950.10:FF:000001">
    <property type="entry name" value="50S ribosomal protein L2"/>
    <property type="match status" value="1"/>
</dbReference>
<dbReference type="Gene3D" id="2.30.30.30">
    <property type="match status" value="1"/>
</dbReference>
<dbReference type="Gene3D" id="2.40.50.140">
    <property type="entry name" value="Nucleic acid-binding proteins"/>
    <property type="match status" value="1"/>
</dbReference>
<dbReference type="Gene3D" id="4.10.950.10">
    <property type="entry name" value="Ribosomal protein L2, domain 3"/>
    <property type="match status" value="1"/>
</dbReference>
<dbReference type="HAMAP" id="MF_01320_B">
    <property type="entry name" value="Ribosomal_uL2_B"/>
    <property type="match status" value="1"/>
</dbReference>
<dbReference type="InterPro" id="IPR012340">
    <property type="entry name" value="NA-bd_OB-fold"/>
</dbReference>
<dbReference type="InterPro" id="IPR014722">
    <property type="entry name" value="Rib_uL2_dom2"/>
</dbReference>
<dbReference type="InterPro" id="IPR002171">
    <property type="entry name" value="Ribosomal_uL2"/>
</dbReference>
<dbReference type="InterPro" id="IPR005880">
    <property type="entry name" value="Ribosomal_uL2_bac/org-type"/>
</dbReference>
<dbReference type="InterPro" id="IPR022669">
    <property type="entry name" value="Ribosomal_uL2_C"/>
</dbReference>
<dbReference type="InterPro" id="IPR022671">
    <property type="entry name" value="Ribosomal_uL2_CS"/>
</dbReference>
<dbReference type="InterPro" id="IPR014726">
    <property type="entry name" value="Ribosomal_uL2_dom3"/>
</dbReference>
<dbReference type="InterPro" id="IPR022666">
    <property type="entry name" value="Ribosomal_uL2_RNA-bd_dom"/>
</dbReference>
<dbReference type="InterPro" id="IPR008991">
    <property type="entry name" value="Translation_prot_SH3-like_sf"/>
</dbReference>
<dbReference type="NCBIfam" id="TIGR01171">
    <property type="entry name" value="rplB_bact"/>
    <property type="match status" value="1"/>
</dbReference>
<dbReference type="PANTHER" id="PTHR13691:SF5">
    <property type="entry name" value="LARGE RIBOSOMAL SUBUNIT PROTEIN UL2M"/>
    <property type="match status" value="1"/>
</dbReference>
<dbReference type="PANTHER" id="PTHR13691">
    <property type="entry name" value="RIBOSOMAL PROTEIN L2"/>
    <property type="match status" value="1"/>
</dbReference>
<dbReference type="Pfam" id="PF00181">
    <property type="entry name" value="Ribosomal_L2"/>
    <property type="match status" value="1"/>
</dbReference>
<dbReference type="Pfam" id="PF03947">
    <property type="entry name" value="Ribosomal_L2_C"/>
    <property type="match status" value="1"/>
</dbReference>
<dbReference type="PIRSF" id="PIRSF002158">
    <property type="entry name" value="Ribosomal_L2"/>
    <property type="match status" value="1"/>
</dbReference>
<dbReference type="SMART" id="SM01383">
    <property type="entry name" value="Ribosomal_L2"/>
    <property type="match status" value="1"/>
</dbReference>
<dbReference type="SMART" id="SM01382">
    <property type="entry name" value="Ribosomal_L2_C"/>
    <property type="match status" value="1"/>
</dbReference>
<dbReference type="SUPFAM" id="SSF50249">
    <property type="entry name" value="Nucleic acid-binding proteins"/>
    <property type="match status" value="1"/>
</dbReference>
<dbReference type="SUPFAM" id="SSF50104">
    <property type="entry name" value="Translation proteins SH3-like domain"/>
    <property type="match status" value="1"/>
</dbReference>
<dbReference type="PROSITE" id="PS00467">
    <property type="entry name" value="RIBOSOMAL_L2"/>
    <property type="match status" value="1"/>
</dbReference>
<reference key="1">
    <citation type="journal article" date="2009" name="Genome Biol.">
        <title>Genomic and genetic analyses of diversity and plant interactions of Pseudomonas fluorescens.</title>
        <authorList>
            <person name="Silby M.W."/>
            <person name="Cerdeno-Tarraga A.M."/>
            <person name="Vernikos G.S."/>
            <person name="Giddens S.R."/>
            <person name="Jackson R.W."/>
            <person name="Preston G.M."/>
            <person name="Zhang X.-X."/>
            <person name="Moon C.D."/>
            <person name="Gehrig S.M."/>
            <person name="Godfrey S.A.C."/>
            <person name="Knight C.G."/>
            <person name="Malone J.G."/>
            <person name="Robinson Z."/>
            <person name="Spiers A.J."/>
            <person name="Harris S."/>
            <person name="Challis G.L."/>
            <person name="Yaxley A.M."/>
            <person name="Harris D."/>
            <person name="Seeger K."/>
            <person name="Murphy L."/>
            <person name="Rutter S."/>
            <person name="Squares R."/>
            <person name="Quail M.A."/>
            <person name="Saunders E."/>
            <person name="Mavromatis K."/>
            <person name="Brettin T.S."/>
            <person name="Bentley S.D."/>
            <person name="Hothersall J."/>
            <person name="Stephens E."/>
            <person name="Thomas C.M."/>
            <person name="Parkhill J."/>
            <person name="Levy S.B."/>
            <person name="Rainey P.B."/>
            <person name="Thomson N.R."/>
        </authorList>
    </citation>
    <scope>NUCLEOTIDE SEQUENCE [LARGE SCALE GENOMIC DNA]</scope>
    <source>
        <strain>SBW25</strain>
    </source>
</reference>
<name>RL2_PSEFS</name>
<comment type="function">
    <text evidence="1">One of the primary rRNA binding proteins. Required for association of the 30S and 50S subunits to form the 70S ribosome, for tRNA binding and peptide bond formation. It has been suggested to have peptidyltransferase activity; this is somewhat controversial. Makes several contacts with the 16S rRNA in the 70S ribosome.</text>
</comment>
<comment type="subunit">
    <text evidence="1">Part of the 50S ribosomal subunit. Forms a bridge to the 30S subunit in the 70S ribosome.</text>
</comment>
<comment type="similarity">
    <text evidence="1">Belongs to the universal ribosomal protein uL2 family.</text>
</comment>
<proteinExistence type="inferred from homology"/>
<accession>C3K2X3</accession>
<sequence length="274" mass="29707">MAIVKCKPTSPGRRFVVKVVNQELHKGAPHAPLLEKKSKTGGRNNNGRITTRHIGGGHKQHYRLVDFRRNDKDGISATVERIEYDPNRTAHIALLLYADGERRYIIAPKGVSAGDQLIAGALAPIKPGNALQLRNIPVGSTVHGIELKPGKGAQIARSAGASAQLIAREGVYVTLRLRSGEMRKVLAECRATLGEVSNSEHSLRSLGKAGAKRWRGVRPTVRGVAMNPVDHPHGGGEGRTSGGRHPVSPWGFPTKGAKTRGNKRTDKMIVRRRK</sequence>
<gene>
    <name evidence="1" type="primary">rplB</name>
    <name type="ordered locus">PFLU_5524</name>
</gene>
<protein>
    <recommendedName>
        <fullName evidence="1">Large ribosomal subunit protein uL2</fullName>
    </recommendedName>
    <alternativeName>
        <fullName evidence="3">50S ribosomal protein L2</fullName>
    </alternativeName>
</protein>
<organism>
    <name type="scientific">Pseudomonas fluorescens (strain SBW25)</name>
    <dbReference type="NCBI Taxonomy" id="216595"/>
    <lineage>
        <taxon>Bacteria</taxon>
        <taxon>Pseudomonadati</taxon>
        <taxon>Pseudomonadota</taxon>
        <taxon>Gammaproteobacteria</taxon>
        <taxon>Pseudomonadales</taxon>
        <taxon>Pseudomonadaceae</taxon>
        <taxon>Pseudomonas</taxon>
    </lineage>
</organism>
<evidence type="ECO:0000255" key="1">
    <source>
        <dbReference type="HAMAP-Rule" id="MF_01320"/>
    </source>
</evidence>
<evidence type="ECO:0000256" key="2">
    <source>
        <dbReference type="SAM" id="MobiDB-lite"/>
    </source>
</evidence>
<evidence type="ECO:0000305" key="3"/>